<organism>
    <name type="scientific">Rhizobium meliloti (strain 1021)</name>
    <name type="common">Ensifer meliloti</name>
    <name type="synonym">Sinorhizobium meliloti</name>
    <dbReference type="NCBI Taxonomy" id="266834"/>
    <lineage>
        <taxon>Bacteria</taxon>
        <taxon>Pseudomonadati</taxon>
        <taxon>Pseudomonadota</taxon>
        <taxon>Alphaproteobacteria</taxon>
        <taxon>Hyphomicrobiales</taxon>
        <taxon>Rhizobiaceae</taxon>
        <taxon>Sinorhizobium/Ensifer group</taxon>
        <taxon>Sinorhizobium</taxon>
    </lineage>
</organism>
<keyword id="KW-1185">Reference proteome</keyword>
<keyword id="KW-0804">Transcription</keyword>
<keyword id="KW-0805">Transcription regulation</keyword>
<accession>O08250</accession>
<feature type="chain" id="PRO_0000064929" description="Biotin transport regulator">
    <location>
        <begin position="1"/>
        <end position="217"/>
    </location>
</feature>
<feature type="region of interest" description="Disordered" evidence="1">
    <location>
        <begin position="14"/>
        <end position="49"/>
    </location>
</feature>
<reference key="1">
    <citation type="journal article" date="1997" name="Mol. Plant Microbe Interact.">
        <title>A biotin-regulated locus, bioS, in a possible survival operon of Rhizobium meliloti.</title>
        <authorList>
            <person name="Streit W.R."/>
            <person name="Phillips D.A."/>
        </authorList>
    </citation>
    <scope>NUCLEOTIDE SEQUENCE [GENOMIC DNA]</scope>
    <source>
        <strain>1021</strain>
    </source>
</reference>
<reference key="2">
    <citation type="journal article" date="2001" name="Proc. Natl. Acad. Sci. U.S.A.">
        <title>Analysis of the chromosome sequence of the legume symbiont Sinorhizobium meliloti strain 1021.</title>
        <authorList>
            <person name="Capela D."/>
            <person name="Barloy-Hubler F."/>
            <person name="Gouzy J."/>
            <person name="Bothe G."/>
            <person name="Ampe F."/>
            <person name="Batut J."/>
            <person name="Boistard P."/>
            <person name="Becker A."/>
            <person name="Boutry M."/>
            <person name="Cadieu E."/>
            <person name="Dreano S."/>
            <person name="Gloux S."/>
            <person name="Godrie T."/>
            <person name="Goffeau A."/>
            <person name="Kahn D."/>
            <person name="Kiss E."/>
            <person name="Lelaure V."/>
            <person name="Masuy D."/>
            <person name="Pohl T."/>
            <person name="Portetelle D."/>
            <person name="Puehler A."/>
            <person name="Purnelle B."/>
            <person name="Ramsperger U."/>
            <person name="Renard C."/>
            <person name="Thebault P."/>
            <person name="Vandenbol M."/>
            <person name="Weidner S."/>
            <person name="Galibert F."/>
        </authorList>
    </citation>
    <scope>NUCLEOTIDE SEQUENCE [LARGE SCALE GENOMIC DNA]</scope>
    <source>
        <strain>1021</strain>
    </source>
</reference>
<reference key="3">
    <citation type="journal article" date="2001" name="Science">
        <title>The composite genome of the legume symbiont Sinorhizobium meliloti.</title>
        <authorList>
            <person name="Galibert F."/>
            <person name="Finan T.M."/>
            <person name="Long S.R."/>
            <person name="Puehler A."/>
            <person name="Abola P."/>
            <person name="Ampe F."/>
            <person name="Barloy-Hubler F."/>
            <person name="Barnett M.J."/>
            <person name="Becker A."/>
            <person name="Boistard P."/>
            <person name="Bothe G."/>
            <person name="Boutry M."/>
            <person name="Bowser L."/>
            <person name="Buhrmester J."/>
            <person name="Cadieu E."/>
            <person name="Capela D."/>
            <person name="Chain P."/>
            <person name="Cowie A."/>
            <person name="Davis R.W."/>
            <person name="Dreano S."/>
            <person name="Federspiel N.A."/>
            <person name="Fisher R.F."/>
            <person name="Gloux S."/>
            <person name="Godrie T."/>
            <person name="Goffeau A."/>
            <person name="Golding B."/>
            <person name="Gouzy J."/>
            <person name="Gurjal M."/>
            <person name="Hernandez-Lucas I."/>
            <person name="Hong A."/>
            <person name="Huizar L."/>
            <person name="Hyman R.W."/>
            <person name="Jones T."/>
            <person name="Kahn D."/>
            <person name="Kahn M.L."/>
            <person name="Kalman S."/>
            <person name="Keating D.H."/>
            <person name="Kiss E."/>
            <person name="Komp C."/>
            <person name="Lelaure V."/>
            <person name="Masuy D."/>
            <person name="Palm C."/>
            <person name="Peck M.C."/>
            <person name="Pohl T.M."/>
            <person name="Portetelle D."/>
            <person name="Purnelle B."/>
            <person name="Ramsperger U."/>
            <person name="Surzycki R."/>
            <person name="Thebault P."/>
            <person name="Vandenbol M."/>
            <person name="Vorhoelter F.J."/>
            <person name="Weidner S."/>
            <person name="Wells D.H."/>
            <person name="Wong K."/>
            <person name="Yeh K.-C."/>
            <person name="Batut J."/>
        </authorList>
    </citation>
    <scope>NUCLEOTIDE SEQUENCE [LARGE SCALE GENOMIC DNA]</scope>
    <source>
        <strain>1021</strain>
    </source>
</reference>
<reference key="4">
    <citation type="journal article" date="1999" name="Mol. Plant Microbe Interact.">
        <title>BioS, a biotin-induced, stationary-phase, and possible LysR-type regulator in Sinorhizobium meliloti.</title>
        <authorList>
            <person name="Heinz E.B."/>
            <person name="Phillips D.A."/>
            <person name="Streit W.R."/>
        </authorList>
    </citation>
    <scope>CHARACTERIZATION</scope>
</reference>
<proteinExistence type="evidence at protein level"/>
<evidence type="ECO:0000256" key="1">
    <source>
        <dbReference type="SAM" id="MobiDB-lite"/>
    </source>
</evidence>
<evidence type="ECO:0000305" key="2"/>
<sequence length="217" mass="23827">MQIENRLNAAAASGDGLGNLAGRSADPTGAADKGESGVPVPPTGFVDPTPRISLSADALLYLGRAKRTPEKLPPLTKDEWNNRLSPQLAAREHQAFGRLAETGDYRAYYRAFIDYYDGLRPEDQNSLRYFGTREAAVAGLRSLDYDADSGLDMDAEFENLVSVFLEEDKIAPSPATTTMSPAERAFFAWDASNISYEVDAPEPRPMTEIERLYSELL</sequence>
<dbReference type="EMBL" id="U81296">
    <property type="protein sequence ID" value="AAB88076.1"/>
    <property type="status" value="ALT_FRAME"/>
    <property type="molecule type" value="Genomic_DNA"/>
</dbReference>
<dbReference type="EMBL" id="AL591688">
    <property type="protein sequence ID" value="CAC46114.1"/>
    <property type="molecule type" value="Genomic_DNA"/>
</dbReference>
<dbReference type="RefSeq" id="NP_385641.1">
    <property type="nucleotide sequence ID" value="NC_003047.1"/>
</dbReference>
<dbReference type="RefSeq" id="WP_010969285.1">
    <property type="nucleotide sequence ID" value="NC_003047.1"/>
</dbReference>
<dbReference type="EnsemblBacteria" id="CAC46114">
    <property type="protein sequence ID" value="CAC46114"/>
    <property type="gene ID" value="SMc02061"/>
</dbReference>
<dbReference type="KEGG" id="sme:SMc02061"/>
<dbReference type="PATRIC" id="fig|266834.11.peg.2958"/>
<dbReference type="eggNOG" id="ENOG5031B54">
    <property type="taxonomic scope" value="Bacteria"/>
</dbReference>
<dbReference type="HOGENOM" id="CLU_1276756_0_0_5"/>
<dbReference type="OrthoDB" id="8354861at2"/>
<dbReference type="Proteomes" id="UP000001976">
    <property type="component" value="Chromosome"/>
</dbReference>
<protein>
    <recommendedName>
        <fullName>Biotin transport regulator</fullName>
    </recommendedName>
</protein>
<name>BIOS_RHIME</name>
<comment type="function">
    <text>May be part of a system that R.meliloti uses to respond to plant (alfalfa) biotin signals.</text>
</comment>
<comment type="caution">
    <text evidence="2">When this protein is expressed in E.coli it migrates as a 36 kDa protein; thus the sequence may be incorrect in the C-terminal section.</text>
</comment>
<comment type="sequence caution" evidence="2">
    <conflict type="frameshift">
        <sequence resource="EMBL-CDS" id="AAB88076"/>
    </conflict>
</comment>
<gene>
    <name type="primary">bioS</name>
    <name type="ordered locus">R01535</name>
    <name type="ORF">SMc02061</name>
</gene>